<keyword id="KW-0030">Aminoacyl-tRNA synthetase</keyword>
<keyword id="KW-0067">ATP-binding</keyword>
<keyword id="KW-0963">Cytoplasm</keyword>
<keyword id="KW-0436">Ligase</keyword>
<keyword id="KW-0479">Metal-binding</keyword>
<keyword id="KW-0547">Nucleotide-binding</keyword>
<keyword id="KW-0648">Protein biosynthesis</keyword>
<keyword id="KW-0694">RNA-binding</keyword>
<keyword id="KW-0820">tRNA-binding</keyword>
<keyword id="KW-0862">Zinc</keyword>
<name>SYA_BARBA</name>
<gene>
    <name evidence="1" type="primary">alaS</name>
</gene>
<proteinExistence type="inferred from homology"/>
<protein>
    <recommendedName>
        <fullName evidence="1">Alanine--tRNA ligase</fullName>
        <ecNumber evidence="1">6.1.1.7</ecNumber>
    </recommendedName>
    <alternativeName>
        <fullName evidence="1">Alanyl-tRNA synthetase</fullName>
        <shortName evidence="1">AlaRS</shortName>
    </alternativeName>
</protein>
<reference key="1">
    <citation type="submission" date="1996-08" db="EMBL/GenBank/DDBJ databases">
        <authorList>
            <person name="Upeslacis E."/>
            <person name="Ihler G.M."/>
        </authorList>
    </citation>
    <scope>NUCLEOTIDE SEQUENCE [GENOMIC DNA]</scope>
</reference>
<evidence type="ECO:0000255" key="1">
    <source>
        <dbReference type="HAMAP-Rule" id="MF_00036"/>
    </source>
</evidence>
<comment type="function">
    <text evidence="1">Catalyzes the attachment of alanine to tRNA(Ala) in a two-step reaction: alanine is first activated by ATP to form Ala-AMP and then transferred to the acceptor end of tRNA(Ala). Also edits incorrectly charged Ser-tRNA(Ala) and Gly-tRNA(Ala) via its editing domain.</text>
</comment>
<comment type="catalytic activity">
    <reaction evidence="1">
        <text>tRNA(Ala) + L-alanine + ATP = L-alanyl-tRNA(Ala) + AMP + diphosphate</text>
        <dbReference type="Rhea" id="RHEA:12540"/>
        <dbReference type="Rhea" id="RHEA-COMP:9657"/>
        <dbReference type="Rhea" id="RHEA-COMP:9923"/>
        <dbReference type="ChEBI" id="CHEBI:30616"/>
        <dbReference type="ChEBI" id="CHEBI:33019"/>
        <dbReference type="ChEBI" id="CHEBI:57972"/>
        <dbReference type="ChEBI" id="CHEBI:78442"/>
        <dbReference type="ChEBI" id="CHEBI:78497"/>
        <dbReference type="ChEBI" id="CHEBI:456215"/>
        <dbReference type="EC" id="6.1.1.7"/>
    </reaction>
</comment>
<comment type="cofactor">
    <cofactor evidence="1">
        <name>Zn(2+)</name>
        <dbReference type="ChEBI" id="CHEBI:29105"/>
    </cofactor>
    <text evidence="1">Binds 1 zinc ion per subunit.</text>
</comment>
<comment type="subcellular location">
    <subcellularLocation>
        <location evidence="1">Cytoplasm</location>
    </subcellularLocation>
</comment>
<comment type="domain">
    <text evidence="1">Consists of three domains; the N-terminal catalytic domain, the editing domain and the C-terminal C-Ala domain. The editing domain removes incorrectly charged amino acids, while the C-Ala domain, along with tRNA(Ala), serves as a bridge to cooperatively bring together the editing and aminoacylation centers thus stimulating deacylation of misacylated tRNAs.</text>
</comment>
<comment type="similarity">
    <text evidence="1">Belongs to the class-II aminoacyl-tRNA synthetase family.</text>
</comment>
<organism>
    <name type="scientific">Bartonella bacilliformis</name>
    <dbReference type="NCBI Taxonomy" id="774"/>
    <lineage>
        <taxon>Bacteria</taxon>
        <taxon>Pseudomonadati</taxon>
        <taxon>Pseudomonadota</taxon>
        <taxon>Alphaproteobacteria</taxon>
        <taxon>Hyphomicrobiales</taxon>
        <taxon>Bartonellaceae</taxon>
        <taxon>Bartonella</taxon>
    </lineage>
</organism>
<sequence>MNSVNNIRSTFLDYFHRNGHEVLSSSPLVPRNDPTLMFTNAGMVDFKNVFTGLEKHSYNRATTAQKCVRAGGKHNDLDNVGYTARHHTFFEMLGNFSFSNYFKEEAIFYAWNLLTKEFCLSKDKLLVTVYHDDDVAAGLWRKISGLSEEKIIRIATNDNFWMMGDTGPCGPCSEIFYDHGDKIWGGPPGSADEDGDRFIEIWNLVFMQYEQLSKEKRIELPQPSIDTGMGLERIAAVLQGVHDNYDIDLFRTLIHASQEIIGVKATGDFFASHRVIADHLRSSAFLIADGIMPSNEGRGYVLRRIMRRAMRHAHLLGSKDLLMWRLVPVLISEMGQAYPELVRAESLISEILKLEETRFRKTLERGLGLLNEASTHLEEGDYFNGEVAFKLYDTYGFPLDLTQDALRRRGISVDVDAFDKAMKRQKAEARANWSGSGDCVTETVWFSIRDQVGATEFLGYETEKAEGIITALIRDGEVVDHIDLGQKAMIVVNQTPFYGESGGQVGDSGIISGANFIFEVHDTQKKGDNVFIHIGEIKTGQAKKHDCVELIVDSARRRKIRANHSATHLLHESLRQTLGSHVVQKGSFVSPDRLRFDFSHPKSISSEELKKIEDLANDIVLQNSKVTTRLMAIDDAIAEGAMALFGEKYGDEVRVISMGNNLEQTGSKKWWSIELCGGTHVQRTGDIGLIHIISETSVAAGVRRIEALTATAARLYLHGQDRRVYEIAGLLKTSPADVQERVQTLLDERRKLEKELNDSRKKIALNGGSVNSQGDIQTINGISFMGGVVSNILPKDLKALVDSGKKKIGSGVVAFISVSEDGKGSAVVGVTDDLTDTLNAVDLVRIISVTLGGQGGGGRRDMAQAGGSEGGKADEALVALKDSLKG</sequence>
<accession>P70865</accession>
<feature type="chain" id="PRO_0000075062" description="Alanine--tRNA ligase">
    <location>
        <begin position="1"/>
        <end position="886"/>
    </location>
</feature>
<feature type="binding site" evidence="1">
    <location>
        <position position="564"/>
    </location>
    <ligand>
        <name>Zn(2+)</name>
        <dbReference type="ChEBI" id="CHEBI:29105"/>
    </ligand>
</feature>
<feature type="binding site" evidence="1">
    <location>
        <position position="568"/>
    </location>
    <ligand>
        <name>Zn(2+)</name>
        <dbReference type="ChEBI" id="CHEBI:29105"/>
    </ligand>
</feature>
<feature type="binding site" evidence="1">
    <location>
        <position position="676"/>
    </location>
    <ligand>
        <name>Zn(2+)</name>
        <dbReference type="ChEBI" id="CHEBI:29105"/>
    </ligand>
</feature>
<feature type="binding site" evidence="1">
    <location>
        <position position="680"/>
    </location>
    <ligand>
        <name>Zn(2+)</name>
        <dbReference type="ChEBI" id="CHEBI:29105"/>
    </ligand>
</feature>
<dbReference type="EC" id="6.1.1.7" evidence="1"/>
<dbReference type="EMBL" id="U68242">
    <property type="protein sequence ID" value="AAB09037.1"/>
    <property type="molecule type" value="Genomic_DNA"/>
</dbReference>
<dbReference type="SMR" id="P70865"/>
<dbReference type="GO" id="GO:0005829">
    <property type="term" value="C:cytosol"/>
    <property type="evidence" value="ECO:0007669"/>
    <property type="project" value="TreeGrafter"/>
</dbReference>
<dbReference type="GO" id="GO:0004813">
    <property type="term" value="F:alanine-tRNA ligase activity"/>
    <property type="evidence" value="ECO:0007669"/>
    <property type="project" value="UniProtKB-UniRule"/>
</dbReference>
<dbReference type="GO" id="GO:0002161">
    <property type="term" value="F:aminoacyl-tRNA deacylase activity"/>
    <property type="evidence" value="ECO:0007669"/>
    <property type="project" value="TreeGrafter"/>
</dbReference>
<dbReference type="GO" id="GO:0005524">
    <property type="term" value="F:ATP binding"/>
    <property type="evidence" value="ECO:0007669"/>
    <property type="project" value="UniProtKB-UniRule"/>
</dbReference>
<dbReference type="GO" id="GO:0000049">
    <property type="term" value="F:tRNA binding"/>
    <property type="evidence" value="ECO:0007669"/>
    <property type="project" value="UniProtKB-KW"/>
</dbReference>
<dbReference type="GO" id="GO:0008270">
    <property type="term" value="F:zinc ion binding"/>
    <property type="evidence" value="ECO:0007669"/>
    <property type="project" value="UniProtKB-UniRule"/>
</dbReference>
<dbReference type="GO" id="GO:0006419">
    <property type="term" value="P:alanyl-tRNA aminoacylation"/>
    <property type="evidence" value="ECO:0007669"/>
    <property type="project" value="UniProtKB-UniRule"/>
</dbReference>
<dbReference type="GO" id="GO:0045892">
    <property type="term" value="P:negative regulation of DNA-templated transcription"/>
    <property type="evidence" value="ECO:0007669"/>
    <property type="project" value="TreeGrafter"/>
</dbReference>
<dbReference type="CDD" id="cd00673">
    <property type="entry name" value="AlaRS_core"/>
    <property type="match status" value="1"/>
</dbReference>
<dbReference type="FunFam" id="2.40.30.130:FF:000001">
    <property type="entry name" value="Alanine--tRNA ligase"/>
    <property type="match status" value="1"/>
</dbReference>
<dbReference type="FunFam" id="3.10.310.40:FF:000001">
    <property type="entry name" value="Alanine--tRNA ligase"/>
    <property type="match status" value="1"/>
</dbReference>
<dbReference type="FunFam" id="3.30.54.20:FF:000001">
    <property type="entry name" value="Alanine--tRNA ligase"/>
    <property type="match status" value="1"/>
</dbReference>
<dbReference type="FunFam" id="3.30.930.10:FF:000004">
    <property type="entry name" value="Alanine--tRNA ligase"/>
    <property type="match status" value="1"/>
</dbReference>
<dbReference type="FunFam" id="3.30.980.10:FF:000004">
    <property type="entry name" value="Alanine--tRNA ligase, cytoplasmic"/>
    <property type="match status" value="1"/>
</dbReference>
<dbReference type="Gene3D" id="2.40.30.130">
    <property type="match status" value="1"/>
</dbReference>
<dbReference type="Gene3D" id="3.10.310.40">
    <property type="match status" value="1"/>
</dbReference>
<dbReference type="Gene3D" id="3.30.54.20">
    <property type="match status" value="1"/>
</dbReference>
<dbReference type="Gene3D" id="6.10.250.550">
    <property type="match status" value="1"/>
</dbReference>
<dbReference type="Gene3D" id="3.30.930.10">
    <property type="entry name" value="Bira Bifunctional Protein, Domain 2"/>
    <property type="match status" value="1"/>
</dbReference>
<dbReference type="Gene3D" id="3.30.980.10">
    <property type="entry name" value="Threonyl-trna Synthetase, Chain A, domain 2"/>
    <property type="match status" value="1"/>
</dbReference>
<dbReference type="HAMAP" id="MF_00036_B">
    <property type="entry name" value="Ala_tRNA_synth_B"/>
    <property type="match status" value="1"/>
</dbReference>
<dbReference type="InterPro" id="IPR045864">
    <property type="entry name" value="aa-tRNA-synth_II/BPL/LPL"/>
</dbReference>
<dbReference type="InterPro" id="IPR002318">
    <property type="entry name" value="Ala-tRNA-lgiase_IIc"/>
</dbReference>
<dbReference type="InterPro" id="IPR018162">
    <property type="entry name" value="Ala-tRNA-ligase_IIc_anticod-bd"/>
</dbReference>
<dbReference type="InterPro" id="IPR018165">
    <property type="entry name" value="Ala-tRNA-synth_IIc_core"/>
</dbReference>
<dbReference type="InterPro" id="IPR018164">
    <property type="entry name" value="Ala-tRNA-synth_IIc_N"/>
</dbReference>
<dbReference type="InterPro" id="IPR050058">
    <property type="entry name" value="Ala-tRNA_ligase"/>
</dbReference>
<dbReference type="InterPro" id="IPR023033">
    <property type="entry name" value="Ala_tRNA_ligase_euk/bac"/>
</dbReference>
<dbReference type="InterPro" id="IPR003156">
    <property type="entry name" value="DHHA1_dom"/>
</dbReference>
<dbReference type="InterPro" id="IPR018163">
    <property type="entry name" value="Thr/Ala-tRNA-synth_IIc_edit"/>
</dbReference>
<dbReference type="InterPro" id="IPR009000">
    <property type="entry name" value="Transl_B-barrel_sf"/>
</dbReference>
<dbReference type="InterPro" id="IPR012947">
    <property type="entry name" value="tRNA_SAD"/>
</dbReference>
<dbReference type="NCBIfam" id="TIGR00344">
    <property type="entry name" value="alaS"/>
    <property type="match status" value="1"/>
</dbReference>
<dbReference type="PANTHER" id="PTHR11777:SF9">
    <property type="entry name" value="ALANINE--TRNA LIGASE, CYTOPLASMIC"/>
    <property type="match status" value="1"/>
</dbReference>
<dbReference type="PANTHER" id="PTHR11777">
    <property type="entry name" value="ALANYL-TRNA SYNTHETASE"/>
    <property type="match status" value="1"/>
</dbReference>
<dbReference type="Pfam" id="PF02272">
    <property type="entry name" value="DHHA1"/>
    <property type="match status" value="1"/>
</dbReference>
<dbReference type="Pfam" id="PF01411">
    <property type="entry name" value="tRNA-synt_2c"/>
    <property type="match status" value="1"/>
</dbReference>
<dbReference type="Pfam" id="PF07973">
    <property type="entry name" value="tRNA_SAD"/>
    <property type="match status" value="1"/>
</dbReference>
<dbReference type="PRINTS" id="PR00980">
    <property type="entry name" value="TRNASYNTHALA"/>
</dbReference>
<dbReference type="SMART" id="SM00863">
    <property type="entry name" value="tRNA_SAD"/>
    <property type="match status" value="1"/>
</dbReference>
<dbReference type="SUPFAM" id="SSF55681">
    <property type="entry name" value="Class II aaRS and biotin synthetases"/>
    <property type="match status" value="1"/>
</dbReference>
<dbReference type="SUPFAM" id="SSF101353">
    <property type="entry name" value="Putative anticodon-binding domain of alanyl-tRNA synthetase (AlaRS)"/>
    <property type="match status" value="1"/>
</dbReference>
<dbReference type="SUPFAM" id="SSF55186">
    <property type="entry name" value="ThrRS/AlaRS common domain"/>
    <property type="match status" value="1"/>
</dbReference>
<dbReference type="SUPFAM" id="SSF50447">
    <property type="entry name" value="Translation proteins"/>
    <property type="match status" value="1"/>
</dbReference>
<dbReference type="PROSITE" id="PS50860">
    <property type="entry name" value="AA_TRNA_LIGASE_II_ALA"/>
    <property type="match status" value="1"/>
</dbReference>